<reference key="1">
    <citation type="journal article" date="2006" name="J. Bacteriol.">
        <title>Pathogenomic sequence analysis of Bacillus cereus and Bacillus thuringiensis isolates closely related to Bacillus anthracis.</title>
        <authorList>
            <person name="Han C.S."/>
            <person name="Xie G."/>
            <person name="Challacombe J.F."/>
            <person name="Altherr M.R."/>
            <person name="Bhotika S.S."/>
            <person name="Bruce D."/>
            <person name="Campbell C.S."/>
            <person name="Campbell M.L."/>
            <person name="Chen J."/>
            <person name="Chertkov O."/>
            <person name="Cleland C."/>
            <person name="Dimitrijevic M."/>
            <person name="Doggett N.A."/>
            <person name="Fawcett J.J."/>
            <person name="Glavina T."/>
            <person name="Goodwin L.A."/>
            <person name="Hill K.K."/>
            <person name="Hitchcock P."/>
            <person name="Jackson P.J."/>
            <person name="Keim P."/>
            <person name="Kewalramani A.R."/>
            <person name="Longmire J."/>
            <person name="Lucas S."/>
            <person name="Malfatti S."/>
            <person name="McMurry K."/>
            <person name="Meincke L.J."/>
            <person name="Misra M."/>
            <person name="Moseman B.L."/>
            <person name="Mundt M."/>
            <person name="Munk A.C."/>
            <person name="Okinaka R.T."/>
            <person name="Parson-Quintana B."/>
            <person name="Reilly L.P."/>
            <person name="Richardson P."/>
            <person name="Robinson D.L."/>
            <person name="Rubin E."/>
            <person name="Saunders E."/>
            <person name="Tapia R."/>
            <person name="Tesmer J.G."/>
            <person name="Thayer N."/>
            <person name="Thompson L.S."/>
            <person name="Tice H."/>
            <person name="Ticknor L.O."/>
            <person name="Wills P.L."/>
            <person name="Brettin T.S."/>
            <person name="Gilna P."/>
        </authorList>
    </citation>
    <scope>NUCLEOTIDE SEQUENCE [LARGE SCALE GENOMIC DNA]</scope>
    <source>
        <strain>97-27</strain>
    </source>
</reference>
<name>SYY1_BACHK</name>
<organism>
    <name type="scientific">Bacillus thuringiensis subsp. konkukian (strain 97-27)</name>
    <dbReference type="NCBI Taxonomy" id="281309"/>
    <lineage>
        <taxon>Bacteria</taxon>
        <taxon>Bacillati</taxon>
        <taxon>Bacillota</taxon>
        <taxon>Bacilli</taxon>
        <taxon>Bacillales</taxon>
        <taxon>Bacillaceae</taxon>
        <taxon>Bacillus</taxon>
        <taxon>Bacillus cereus group</taxon>
    </lineage>
</organism>
<gene>
    <name evidence="1" type="primary">tyrS1</name>
    <name type="ordered locus">BT9727_4391</name>
</gene>
<evidence type="ECO:0000255" key="1">
    <source>
        <dbReference type="HAMAP-Rule" id="MF_02006"/>
    </source>
</evidence>
<feature type="chain" id="PRO_0000234676" description="Tyrosine--tRNA ligase 1">
    <location>
        <begin position="1"/>
        <end position="418"/>
    </location>
</feature>
<feature type="domain" description="S4 RNA-binding" evidence="1">
    <location>
        <begin position="352"/>
        <end position="418"/>
    </location>
</feature>
<feature type="short sequence motif" description="'HIGH' region">
    <location>
        <begin position="39"/>
        <end position="48"/>
    </location>
</feature>
<feature type="short sequence motif" description="'KMSKS' region">
    <location>
        <begin position="230"/>
        <end position="234"/>
    </location>
</feature>
<feature type="binding site" evidence="1">
    <location>
        <position position="34"/>
    </location>
    <ligand>
        <name>L-tyrosine</name>
        <dbReference type="ChEBI" id="CHEBI:58315"/>
    </ligand>
</feature>
<feature type="binding site" evidence="1">
    <location>
        <position position="169"/>
    </location>
    <ligand>
        <name>L-tyrosine</name>
        <dbReference type="ChEBI" id="CHEBI:58315"/>
    </ligand>
</feature>
<feature type="binding site" evidence="1">
    <location>
        <position position="173"/>
    </location>
    <ligand>
        <name>L-tyrosine</name>
        <dbReference type="ChEBI" id="CHEBI:58315"/>
    </ligand>
</feature>
<feature type="binding site" evidence="1">
    <location>
        <position position="233"/>
    </location>
    <ligand>
        <name>ATP</name>
        <dbReference type="ChEBI" id="CHEBI:30616"/>
    </ligand>
</feature>
<comment type="function">
    <text evidence="1">Catalyzes the attachment of tyrosine to tRNA(Tyr) in a two-step reaction: tyrosine is first activated by ATP to form Tyr-AMP and then transferred to the acceptor end of tRNA(Tyr).</text>
</comment>
<comment type="catalytic activity">
    <reaction evidence="1">
        <text>tRNA(Tyr) + L-tyrosine + ATP = L-tyrosyl-tRNA(Tyr) + AMP + diphosphate + H(+)</text>
        <dbReference type="Rhea" id="RHEA:10220"/>
        <dbReference type="Rhea" id="RHEA-COMP:9706"/>
        <dbReference type="Rhea" id="RHEA-COMP:9707"/>
        <dbReference type="ChEBI" id="CHEBI:15378"/>
        <dbReference type="ChEBI" id="CHEBI:30616"/>
        <dbReference type="ChEBI" id="CHEBI:33019"/>
        <dbReference type="ChEBI" id="CHEBI:58315"/>
        <dbReference type="ChEBI" id="CHEBI:78442"/>
        <dbReference type="ChEBI" id="CHEBI:78536"/>
        <dbReference type="ChEBI" id="CHEBI:456215"/>
        <dbReference type="EC" id="6.1.1.1"/>
    </reaction>
</comment>
<comment type="subunit">
    <text evidence="1">Homodimer.</text>
</comment>
<comment type="subcellular location">
    <subcellularLocation>
        <location evidence="1">Cytoplasm</location>
    </subcellularLocation>
</comment>
<comment type="similarity">
    <text evidence="1">Belongs to the class-I aminoacyl-tRNA synthetase family. TyrS type 1 subfamily.</text>
</comment>
<sequence>MGILQDLEFRGLINQQTDAEGLEQLLEKESVKLYCGFDPTADSLHIGHMLPVLMLRRFQLAGHQPIALVGGGTGMIGDPSGKKAERTLNTKDTVAYYTESIKNQLSNFLEFENVENPATMANNYDWLGNLDVISFLRDIGKNFGLNYMLAKDTVASRLETGISFTEFSYMILQSYDFLNLYQHHNCRLQIGGSDQWGNITAGLELIRKSEEDAKAFGLTIPLVTKSDGTKFGKTEGGAIWLDPEKTTPYEFYQFWINTDDRDVVKYLKYFTFLSHEEILELEKQVAEAPEKRAAQKALGAEMTKLVHGEEALEQAIKISAALFSGSVAELTASEIEQGFKDVPSVERTAEDTVLIDLLVESKISPSKRQAREDVTNGAIYVNGERTQALDYVVTEKDRIEGKFTIIRRGKKKYFLIRY</sequence>
<accession>Q6HCM0</accession>
<dbReference type="EC" id="6.1.1.1" evidence="1"/>
<dbReference type="EMBL" id="AE017355">
    <property type="protein sequence ID" value="AAT63895.1"/>
    <property type="molecule type" value="Genomic_DNA"/>
</dbReference>
<dbReference type="RefSeq" id="YP_038706.1">
    <property type="nucleotide sequence ID" value="NC_005957.1"/>
</dbReference>
<dbReference type="SMR" id="Q6HCM0"/>
<dbReference type="KEGG" id="btk:BT9727_4391"/>
<dbReference type="PATRIC" id="fig|281309.8.peg.4680"/>
<dbReference type="HOGENOM" id="CLU_024003_0_3_9"/>
<dbReference type="Proteomes" id="UP000001301">
    <property type="component" value="Chromosome"/>
</dbReference>
<dbReference type="GO" id="GO:0005829">
    <property type="term" value="C:cytosol"/>
    <property type="evidence" value="ECO:0007669"/>
    <property type="project" value="TreeGrafter"/>
</dbReference>
<dbReference type="GO" id="GO:0005524">
    <property type="term" value="F:ATP binding"/>
    <property type="evidence" value="ECO:0007669"/>
    <property type="project" value="UniProtKB-UniRule"/>
</dbReference>
<dbReference type="GO" id="GO:0003723">
    <property type="term" value="F:RNA binding"/>
    <property type="evidence" value="ECO:0007669"/>
    <property type="project" value="UniProtKB-KW"/>
</dbReference>
<dbReference type="GO" id="GO:0004831">
    <property type="term" value="F:tyrosine-tRNA ligase activity"/>
    <property type="evidence" value="ECO:0007669"/>
    <property type="project" value="UniProtKB-UniRule"/>
</dbReference>
<dbReference type="GO" id="GO:0006437">
    <property type="term" value="P:tyrosyl-tRNA aminoacylation"/>
    <property type="evidence" value="ECO:0007669"/>
    <property type="project" value="UniProtKB-UniRule"/>
</dbReference>
<dbReference type="CDD" id="cd00165">
    <property type="entry name" value="S4"/>
    <property type="match status" value="1"/>
</dbReference>
<dbReference type="CDD" id="cd00395">
    <property type="entry name" value="Tyr_Trp_RS_core"/>
    <property type="match status" value="1"/>
</dbReference>
<dbReference type="FunFam" id="1.10.240.10:FF:000001">
    <property type="entry name" value="Tyrosine--tRNA ligase"/>
    <property type="match status" value="1"/>
</dbReference>
<dbReference type="FunFam" id="3.10.290.10:FF:000012">
    <property type="entry name" value="Tyrosine--tRNA ligase"/>
    <property type="match status" value="1"/>
</dbReference>
<dbReference type="FunFam" id="3.40.50.620:FF:000008">
    <property type="entry name" value="Tyrosine--tRNA ligase"/>
    <property type="match status" value="1"/>
</dbReference>
<dbReference type="Gene3D" id="3.40.50.620">
    <property type="entry name" value="HUPs"/>
    <property type="match status" value="1"/>
</dbReference>
<dbReference type="Gene3D" id="3.10.290.10">
    <property type="entry name" value="RNA-binding S4 domain"/>
    <property type="match status" value="1"/>
</dbReference>
<dbReference type="Gene3D" id="1.10.240.10">
    <property type="entry name" value="Tyrosyl-Transfer RNA Synthetase"/>
    <property type="match status" value="1"/>
</dbReference>
<dbReference type="HAMAP" id="MF_02006">
    <property type="entry name" value="Tyr_tRNA_synth_type1"/>
    <property type="match status" value="1"/>
</dbReference>
<dbReference type="InterPro" id="IPR001412">
    <property type="entry name" value="aa-tRNA-synth_I_CS"/>
</dbReference>
<dbReference type="InterPro" id="IPR002305">
    <property type="entry name" value="aa-tRNA-synth_Ic"/>
</dbReference>
<dbReference type="InterPro" id="IPR014729">
    <property type="entry name" value="Rossmann-like_a/b/a_fold"/>
</dbReference>
<dbReference type="InterPro" id="IPR002942">
    <property type="entry name" value="S4_RNA-bd"/>
</dbReference>
<dbReference type="InterPro" id="IPR036986">
    <property type="entry name" value="S4_RNA-bd_sf"/>
</dbReference>
<dbReference type="InterPro" id="IPR054608">
    <property type="entry name" value="SYY-like_C"/>
</dbReference>
<dbReference type="InterPro" id="IPR002307">
    <property type="entry name" value="Tyr-tRNA-ligase"/>
</dbReference>
<dbReference type="InterPro" id="IPR024088">
    <property type="entry name" value="Tyr-tRNA-ligase_bac-type"/>
</dbReference>
<dbReference type="InterPro" id="IPR024107">
    <property type="entry name" value="Tyr-tRNA-ligase_bac_1"/>
</dbReference>
<dbReference type="NCBIfam" id="TIGR00234">
    <property type="entry name" value="tyrS"/>
    <property type="match status" value="1"/>
</dbReference>
<dbReference type="PANTHER" id="PTHR11766:SF0">
    <property type="entry name" value="TYROSINE--TRNA LIGASE, MITOCHONDRIAL"/>
    <property type="match status" value="1"/>
</dbReference>
<dbReference type="PANTHER" id="PTHR11766">
    <property type="entry name" value="TYROSYL-TRNA SYNTHETASE"/>
    <property type="match status" value="1"/>
</dbReference>
<dbReference type="Pfam" id="PF22421">
    <property type="entry name" value="SYY_C-terminal"/>
    <property type="match status" value="1"/>
</dbReference>
<dbReference type="Pfam" id="PF00579">
    <property type="entry name" value="tRNA-synt_1b"/>
    <property type="match status" value="1"/>
</dbReference>
<dbReference type="PRINTS" id="PR01040">
    <property type="entry name" value="TRNASYNTHTYR"/>
</dbReference>
<dbReference type="SMART" id="SM00363">
    <property type="entry name" value="S4"/>
    <property type="match status" value="1"/>
</dbReference>
<dbReference type="SUPFAM" id="SSF55174">
    <property type="entry name" value="Alpha-L RNA-binding motif"/>
    <property type="match status" value="1"/>
</dbReference>
<dbReference type="SUPFAM" id="SSF52374">
    <property type="entry name" value="Nucleotidylyl transferase"/>
    <property type="match status" value="1"/>
</dbReference>
<dbReference type="PROSITE" id="PS00178">
    <property type="entry name" value="AA_TRNA_LIGASE_I"/>
    <property type="match status" value="1"/>
</dbReference>
<dbReference type="PROSITE" id="PS50889">
    <property type="entry name" value="S4"/>
    <property type="match status" value="1"/>
</dbReference>
<protein>
    <recommendedName>
        <fullName evidence="1">Tyrosine--tRNA ligase 1</fullName>
        <ecNumber evidence="1">6.1.1.1</ecNumber>
    </recommendedName>
    <alternativeName>
        <fullName evidence="1">Tyrosyl-tRNA synthetase 1</fullName>
        <shortName evidence="1">TyrRS 1</shortName>
    </alternativeName>
</protein>
<keyword id="KW-0030">Aminoacyl-tRNA synthetase</keyword>
<keyword id="KW-0067">ATP-binding</keyword>
<keyword id="KW-0963">Cytoplasm</keyword>
<keyword id="KW-0436">Ligase</keyword>
<keyword id="KW-0547">Nucleotide-binding</keyword>
<keyword id="KW-0648">Protein biosynthesis</keyword>
<keyword id="KW-0694">RNA-binding</keyword>
<proteinExistence type="inferred from homology"/>